<sequence length="498" mass="55415">MHTHNNFKTPSDEDELDDLDEDMVVGVIAEIEQEVLNESDSDNDEYDLVEMGAPVPDNDGDSSYDGNESISSDDSFDPNAADSDSDDSMLDDAGDDASAGGATSSKRRKDDDNPSGSNRQSEATFDLDEDDETDETVRAMIAAIKKPRSAPPEIKLEDFITDICFHPDRDIIALATIIGDVHLYEYDNEANKLLRTIEVHSKACRDVEFTEDGRFLLTCSKDKCVMVTDMETEKLKKLYETAHDDAINTLHVLNENLFATGDDAGTVKLWDLRTKNAIFELKELEDQITQLTTNDQSKLLLATSADGYLTTFNIAARKMYVQSEPYEEELSCMGIYRGDSKLVVGTSKGRLYTYNWGQFGYHCDMYPGIKSPISLMIPITDRIACVAGEDGNIRACHIAPYRNLGVVGQHNMPIESLDVNSNGELIASSSHNNDVRFWNVKYFEDFGDIKYNEKHNAYKEQRHNLPSSKCSNASDFFADLTKEDADDDDAGAGPSNMA</sequence>
<feature type="chain" id="PRO_0000373959" description="WD repeat-containing protein 55 homolog">
    <location>
        <begin position="1"/>
        <end position="498"/>
    </location>
</feature>
<feature type="repeat" description="WD 1">
    <location>
        <begin position="155"/>
        <end position="194"/>
    </location>
</feature>
<feature type="repeat" description="WD 2">
    <location>
        <begin position="199"/>
        <end position="238"/>
    </location>
</feature>
<feature type="repeat" description="WD 3">
    <location>
        <begin position="242"/>
        <end position="280"/>
    </location>
</feature>
<feature type="repeat" description="WD 4">
    <location>
        <begin position="283"/>
        <end position="322"/>
    </location>
</feature>
<feature type="repeat" description="WD 5">
    <location>
        <begin position="325"/>
        <end position="364"/>
    </location>
</feature>
<feature type="repeat" description="WD 6">
    <location>
        <begin position="409"/>
        <end position="448"/>
    </location>
</feature>
<feature type="region of interest" description="Disordered" evidence="1">
    <location>
        <begin position="1"/>
        <end position="133"/>
    </location>
</feature>
<feature type="compositionally biased region" description="Acidic residues" evidence="1">
    <location>
        <begin position="12"/>
        <end position="23"/>
    </location>
</feature>
<feature type="compositionally biased region" description="Acidic residues" evidence="1">
    <location>
        <begin position="31"/>
        <end position="48"/>
    </location>
</feature>
<feature type="compositionally biased region" description="Acidic residues" evidence="1">
    <location>
        <begin position="83"/>
        <end position="95"/>
    </location>
</feature>
<feature type="compositionally biased region" description="Polar residues" evidence="1">
    <location>
        <begin position="114"/>
        <end position="123"/>
    </location>
</feature>
<comment type="similarity">
    <text evidence="2">Belongs to the WD repeat WDR55 family.</text>
</comment>
<accession>B3P4F8</accession>
<name>WDR55_DROER</name>
<gene>
    <name type="ORF">GG18443</name>
</gene>
<keyword id="KW-0677">Repeat</keyword>
<keyword id="KW-0853">WD repeat</keyword>
<evidence type="ECO:0000256" key="1">
    <source>
        <dbReference type="SAM" id="MobiDB-lite"/>
    </source>
</evidence>
<evidence type="ECO:0000305" key="2"/>
<dbReference type="EMBL" id="CH954181">
    <property type="protein sequence ID" value="EDV49473.1"/>
    <property type="molecule type" value="Genomic_DNA"/>
</dbReference>
<dbReference type="SMR" id="B3P4F8"/>
<dbReference type="EnsemblMetazoa" id="FBtr0138497">
    <property type="protein sequence ID" value="FBpp0136989"/>
    <property type="gene ID" value="FBgn0110658"/>
</dbReference>
<dbReference type="EnsemblMetazoa" id="XM_001980479.3">
    <property type="protein sequence ID" value="XP_001980515.1"/>
    <property type="gene ID" value="LOC6553820"/>
</dbReference>
<dbReference type="GeneID" id="6553820"/>
<dbReference type="KEGG" id="der:6553820"/>
<dbReference type="eggNOG" id="KOG2444">
    <property type="taxonomic scope" value="Eukaryota"/>
</dbReference>
<dbReference type="HOGENOM" id="CLU_035848_1_0_1"/>
<dbReference type="OMA" id="QAIHPTE"/>
<dbReference type="OrthoDB" id="2288928at2759"/>
<dbReference type="PhylomeDB" id="B3P4F8"/>
<dbReference type="Proteomes" id="UP000008711">
    <property type="component" value="Unassembled WGS sequence"/>
</dbReference>
<dbReference type="GO" id="GO:0050829">
    <property type="term" value="P:defense response to Gram-negative bacterium"/>
    <property type="evidence" value="ECO:0007669"/>
    <property type="project" value="EnsemblMetazoa"/>
</dbReference>
<dbReference type="FunFam" id="2.130.10.10:FF:001280">
    <property type="entry name" value="WD repeat-containing protein 55 homolog"/>
    <property type="match status" value="1"/>
</dbReference>
<dbReference type="FunFam" id="2.130.10.10:FF:001796">
    <property type="entry name" value="WD repeat-containing protein 55 homolog"/>
    <property type="match status" value="1"/>
</dbReference>
<dbReference type="Gene3D" id="2.130.10.10">
    <property type="entry name" value="YVTN repeat-like/Quinoprotein amine dehydrogenase"/>
    <property type="match status" value="2"/>
</dbReference>
<dbReference type="InterPro" id="IPR015943">
    <property type="entry name" value="WD40/YVTN_repeat-like_dom_sf"/>
</dbReference>
<dbReference type="InterPro" id="IPR019775">
    <property type="entry name" value="WD40_repeat_CS"/>
</dbReference>
<dbReference type="InterPro" id="IPR036322">
    <property type="entry name" value="WD40_repeat_dom_sf"/>
</dbReference>
<dbReference type="InterPro" id="IPR001680">
    <property type="entry name" value="WD40_rpt"/>
</dbReference>
<dbReference type="InterPro" id="IPR050505">
    <property type="entry name" value="WDR55_POC1"/>
</dbReference>
<dbReference type="PANTHER" id="PTHR44019">
    <property type="entry name" value="WD REPEAT-CONTAINING PROTEIN 55"/>
    <property type="match status" value="1"/>
</dbReference>
<dbReference type="PANTHER" id="PTHR44019:SF20">
    <property type="entry name" value="WD REPEAT-CONTAINING PROTEIN 55"/>
    <property type="match status" value="1"/>
</dbReference>
<dbReference type="Pfam" id="PF24796">
    <property type="entry name" value="WDR55"/>
    <property type="match status" value="1"/>
</dbReference>
<dbReference type="SMART" id="SM00320">
    <property type="entry name" value="WD40"/>
    <property type="match status" value="5"/>
</dbReference>
<dbReference type="SUPFAM" id="SSF50978">
    <property type="entry name" value="WD40 repeat-like"/>
    <property type="match status" value="1"/>
</dbReference>
<dbReference type="PROSITE" id="PS00678">
    <property type="entry name" value="WD_REPEATS_1"/>
    <property type="match status" value="1"/>
</dbReference>
<dbReference type="PROSITE" id="PS50082">
    <property type="entry name" value="WD_REPEATS_2"/>
    <property type="match status" value="3"/>
</dbReference>
<dbReference type="PROSITE" id="PS50294">
    <property type="entry name" value="WD_REPEATS_REGION"/>
    <property type="match status" value="1"/>
</dbReference>
<protein>
    <recommendedName>
        <fullName>WD repeat-containing protein 55 homolog</fullName>
    </recommendedName>
</protein>
<organism>
    <name type="scientific">Drosophila erecta</name>
    <name type="common">Fruit fly</name>
    <dbReference type="NCBI Taxonomy" id="7220"/>
    <lineage>
        <taxon>Eukaryota</taxon>
        <taxon>Metazoa</taxon>
        <taxon>Ecdysozoa</taxon>
        <taxon>Arthropoda</taxon>
        <taxon>Hexapoda</taxon>
        <taxon>Insecta</taxon>
        <taxon>Pterygota</taxon>
        <taxon>Neoptera</taxon>
        <taxon>Endopterygota</taxon>
        <taxon>Diptera</taxon>
        <taxon>Brachycera</taxon>
        <taxon>Muscomorpha</taxon>
        <taxon>Ephydroidea</taxon>
        <taxon>Drosophilidae</taxon>
        <taxon>Drosophila</taxon>
        <taxon>Sophophora</taxon>
    </lineage>
</organism>
<reference key="1">
    <citation type="journal article" date="2007" name="Nature">
        <title>Evolution of genes and genomes on the Drosophila phylogeny.</title>
        <authorList>
            <consortium name="Drosophila 12 genomes consortium"/>
        </authorList>
    </citation>
    <scope>NUCLEOTIDE SEQUENCE [LARGE SCALE GENOMIC DNA]</scope>
    <source>
        <strain>Tucson 14021-0224.01</strain>
    </source>
</reference>
<proteinExistence type="inferred from homology"/>